<sequence>MKVLWAALVVTLLAGCQADVEPELEVQEPAVWQSGQPWELALGRFWDYLRWVQTLSEQVQEELLSSHVTQELTLLMEDTMKEVKAYKSELEQELAPMAEDTKARLSKELQAAQSRLRADMEEVLNRLSQYRGEVQTMMGQSGEELRARLAAHLRKLRKRLLRDVEEVQKRMDVYRAGAQEGAERSVSAIRERMGSLVEEGRLQSLPSQPLRERAQAWGEQMRGRLEKVGSQARDRLEEVREQMEEVRGKVEEQAEAFQARFKSWFEPMMEDMRRQWADLIEKVQVAVGASTAAPSQKS</sequence>
<organism>
    <name type="scientific">Dasyprocta punctata</name>
    <name type="common">Central American agouti</name>
    <dbReference type="NCBI Taxonomy" id="34846"/>
    <lineage>
        <taxon>Eukaryota</taxon>
        <taxon>Metazoa</taxon>
        <taxon>Chordata</taxon>
        <taxon>Craniata</taxon>
        <taxon>Vertebrata</taxon>
        <taxon>Euteleostomi</taxon>
        <taxon>Mammalia</taxon>
        <taxon>Eutheria</taxon>
        <taxon>Euarchontoglires</taxon>
        <taxon>Glires</taxon>
        <taxon>Rodentia</taxon>
        <taxon>Hystricomorpha</taxon>
        <taxon>Dasyproctidae</taxon>
        <taxon>Dasyprocta</taxon>
    </lineage>
</organism>
<reference key="1">
    <citation type="submission" date="2018-09" db="EMBL/GenBank/DDBJ databases">
        <title>The 200 mammals project: sequencing genomes by a novel cost-effective method, yielding a high resolution annotation of the human genome.</title>
        <authorList>
            <person name="Johnson J."/>
            <person name="Muren E."/>
            <person name="Swofford R."/>
            <person name="Turner-Maier J."/>
            <person name="Marinescu V."/>
            <person name="Genereux D."/>
            <person name="Birren B."/>
            <person name="Karlsson E.K."/>
            <person name="Lindblad-Toh K."/>
        </authorList>
    </citation>
    <scope>NUCLEOTIDE SEQUENCE [LARGE SCALE GENOMIC DNA]</scope>
</reference>
<reference key="2">
    <citation type="unpublished observations" date="2021-07">
        <authorList>
            <person name="Puppione D.L."/>
        </authorList>
    </citation>
    <scope>IDENTIFICATION</scope>
</reference>
<keyword id="KW-0162">Chylomicron</keyword>
<keyword id="KW-0967">Endosome</keyword>
<keyword id="KW-0272">Extracellular matrix</keyword>
<keyword id="KW-0325">Glycoprotein</keyword>
<keyword id="KW-0345">HDL</keyword>
<keyword id="KW-0358">Heparin-binding</keyword>
<keyword id="KW-0445">Lipid transport</keyword>
<keyword id="KW-0446">Lipid-binding</keyword>
<keyword id="KW-0558">Oxidation</keyword>
<keyword id="KW-0597">Phosphoprotein</keyword>
<keyword id="KW-0677">Repeat</keyword>
<keyword id="KW-0964">Secreted</keyword>
<keyword id="KW-0732">Signal</keyword>
<keyword id="KW-0813">Transport</keyword>
<keyword id="KW-0850">VLDL</keyword>
<protein>
    <recommendedName>
        <fullName>Apolipoprotein E</fullName>
        <shortName>Apo-E</shortName>
    </recommendedName>
</protein>
<proteinExistence type="inferred from homology"/>
<dbReference type="EMBL" id="RJWM01082531">
    <property type="status" value="NOT_ANNOTATED_CDS"/>
    <property type="molecule type" value="Genomic_DNA"/>
</dbReference>
<dbReference type="SMR" id="P0DUY5"/>
<dbReference type="GO" id="GO:0042627">
    <property type="term" value="C:chylomicron"/>
    <property type="evidence" value="ECO:0007669"/>
    <property type="project" value="UniProtKB-KW"/>
</dbReference>
<dbReference type="GO" id="GO:0070062">
    <property type="term" value="C:extracellular exosome"/>
    <property type="evidence" value="ECO:0000250"/>
    <property type="project" value="UniProtKB"/>
</dbReference>
<dbReference type="GO" id="GO:0034364">
    <property type="term" value="C:high-density lipoprotein particle"/>
    <property type="evidence" value="ECO:0007669"/>
    <property type="project" value="UniProtKB-KW"/>
</dbReference>
<dbReference type="GO" id="GO:0034362">
    <property type="term" value="C:low-density lipoprotein particle"/>
    <property type="evidence" value="ECO:0007669"/>
    <property type="project" value="TreeGrafter"/>
</dbReference>
<dbReference type="GO" id="GO:0097487">
    <property type="term" value="C:multivesicular body, internal vesicle"/>
    <property type="evidence" value="ECO:0000250"/>
    <property type="project" value="UniProtKB"/>
</dbReference>
<dbReference type="GO" id="GO:0034361">
    <property type="term" value="C:very-low-density lipoprotein particle"/>
    <property type="evidence" value="ECO:0007669"/>
    <property type="project" value="UniProtKB-KW"/>
</dbReference>
<dbReference type="GO" id="GO:0120020">
    <property type="term" value="F:cholesterol transfer activity"/>
    <property type="evidence" value="ECO:0007669"/>
    <property type="project" value="TreeGrafter"/>
</dbReference>
<dbReference type="GO" id="GO:0008201">
    <property type="term" value="F:heparin binding"/>
    <property type="evidence" value="ECO:0007669"/>
    <property type="project" value="UniProtKB-KW"/>
</dbReference>
<dbReference type="GO" id="GO:0060228">
    <property type="term" value="F:phosphatidylcholine-sterol O-acyltransferase activator activity"/>
    <property type="evidence" value="ECO:0007669"/>
    <property type="project" value="TreeGrafter"/>
</dbReference>
<dbReference type="GO" id="GO:0005543">
    <property type="term" value="F:phospholipid binding"/>
    <property type="evidence" value="ECO:0007669"/>
    <property type="project" value="TreeGrafter"/>
</dbReference>
<dbReference type="GO" id="GO:0055090">
    <property type="term" value="P:acylglycerol homeostasis"/>
    <property type="evidence" value="ECO:0007669"/>
    <property type="project" value="TreeGrafter"/>
</dbReference>
<dbReference type="GO" id="GO:0033344">
    <property type="term" value="P:cholesterol efflux"/>
    <property type="evidence" value="ECO:0007669"/>
    <property type="project" value="TreeGrafter"/>
</dbReference>
<dbReference type="GO" id="GO:0008203">
    <property type="term" value="P:cholesterol metabolic process"/>
    <property type="evidence" value="ECO:0007669"/>
    <property type="project" value="TreeGrafter"/>
</dbReference>
<dbReference type="GO" id="GO:0042157">
    <property type="term" value="P:lipoprotein metabolic process"/>
    <property type="evidence" value="ECO:0007669"/>
    <property type="project" value="InterPro"/>
</dbReference>
<dbReference type="GO" id="GO:0032438">
    <property type="term" value="P:melanosome organization"/>
    <property type="evidence" value="ECO:0000250"/>
    <property type="project" value="UniProtKB"/>
</dbReference>
<dbReference type="GO" id="GO:0033700">
    <property type="term" value="P:phospholipid efflux"/>
    <property type="evidence" value="ECO:0007669"/>
    <property type="project" value="TreeGrafter"/>
</dbReference>
<dbReference type="FunFam" id="1.20.120.20:FF:000002">
    <property type="entry name" value="Apolipoprotein E"/>
    <property type="match status" value="1"/>
</dbReference>
<dbReference type="FunFam" id="1.20.120.20:FF:000003">
    <property type="entry name" value="Apolipoprotein E"/>
    <property type="match status" value="1"/>
</dbReference>
<dbReference type="Gene3D" id="1.20.120.20">
    <property type="entry name" value="Apolipoprotein"/>
    <property type="match status" value="2"/>
</dbReference>
<dbReference type="InterPro" id="IPR000074">
    <property type="entry name" value="ApoA_E"/>
</dbReference>
<dbReference type="InterPro" id="IPR050163">
    <property type="entry name" value="Apolipoprotein_A1/A4/E"/>
</dbReference>
<dbReference type="PANTHER" id="PTHR18976">
    <property type="entry name" value="APOLIPOPROTEIN"/>
    <property type="match status" value="1"/>
</dbReference>
<dbReference type="PANTHER" id="PTHR18976:SF2">
    <property type="entry name" value="APOLIPOPROTEIN E"/>
    <property type="match status" value="1"/>
</dbReference>
<dbReference type="Pfam" id="PF01442">
    <property type="entry name" value="Apolipoprotein"/>
    <property type="match status" value="1"/>
</dbReference>
<dbReference type="SUPFAM" id="SSF58113">
    <property type="entry name" value="Apolipoprotein A-I"/>
    <property type="match status" value="1"/>
</dbReference>
<accession>P0DUY5</accession>
<comment type="function">
    <text evidence="1">APOE is an apolipoprotein, a protein associating with lipid particles, that mainly functions in lipoprotein-mediated lipid transport between organs via the plasma and interstitial fluids. APOE is a core component of plasma lipoproteins and is involved in their production, conversion and clearance. Apolipoproteins are amphipathic molecules that interact both with lipids of the lipoprotein particle core and the aqueous environment of the plasma. As such, APOE associates with chylomicrons, chylomicron remnants, very low density lipoproteins (VLDL) and intermediate density lipoproteins (IDL) but shows a preferential binding to high-density lipoproteins (HDL). It also binds a wide range of cellular receptors including the LDL receptor/LDLR, the LDL receptor-related proteins LRP1, LRP2 and LRP8 and the very low-density lipoprotein receptor/VLDLR that mediate the cellular uptake of the APOE-containing lipoprotein particles. Finally, APOE also has a heparin-binding activity and binds heparan-sulfate proteoglycans on the surface of cells, a property that supports the capture and the receptor-mediated uptake of APOE-containing lipoproteins by cells. A main function of APOE is to mediate lipoprotein clearance through the uptake of chylomicrons, VLDLs, and HDLs by hepatocytes. APOE is also involved in the biosynthesis by the liver of VLDLs as well as their uptake by peripheral tissues ensuring the delivery of triglycerides and energy storage in muscle, heart and adipose tissues. By participating in the lipoprotein-mediated distribution of lipids among tissues, APOE plays a critical role in plasma and tissues lipid homeostasis. APOE is also involved in two steps of reverse cholesterol transport, the HDLs-mediated transport of cholesterol from peripheral tissues to the liver, and thereby plays an important role in cholesterol homeostasis. First, it is functionally associated with ABCA1 in the biogenesis of HDLs in tissues. Second, it is enriched in circulating HDLs and mediates their uptake by hepatocytes. APOE also plays an important role in lipid transport in the central nervous system, regulating neuron survival and sprouting.</text>
</comment>
<comment type="subunit">
    <text evidence="1">Homotetramer. May interact with ABCA1; functionally associated with ABCA1 in the biogenesis of HDLs. May interact with APP/A4 amyloid-beta peptide; the interaction is extremely stable in vitro but its physiological significance is unclear. May interact with MAPT. May interact with MAP2. In the cerebrospinal fluid, interacts with secreted SORL1. Interacts with PMEL; this allows the loading of PMEL luminal fragment on ILVs to induce fibril nucleation.</text>
</comment>
<comment type="subcellular location">
    <subcellularLocation>
        <location evidence="1">Secreted</location>
    </subcellularLocation>
    <subcellularLocation>
        <location evidence="1">Secreted</location>
        <location evidence="1">Extracellular space</location>
    </subcellularLocation>
    <subcellularLocation>
        <location evidence="1">Secreted</location>
        <location evidence="1">Extracellular space</location>
        <location evidence="1">Extracellular matrix</location>
    </subcellularLocation>
    <subcellularLocation>
        <location evidence="1">Extracellular vesicle</location>
    </subcellularLocation>
    <subcellularLocation>
        <location evidence="1">Endosome</location>
        <location evidence="1">Multivesicular body</location>
    </subcellularLocation>
    <text evidence="1">In the plasma, APOE is associated with chylomicrons, chylomicrons remnants, VLDL, LDL and HDL lipoproteins. Lipid poor oligomeric APOE is associated with the extracellular matrix in a calcium- and heparan-sulfate proteoglycans-dependent manner. Lipidation induces the release from the extracellular matrix. Colocalizes with CD63 and PMEL at exosomes and in intraluminal vesicles within multivesicular endosomes.</text>
</comment>
<comment type="PTM">
    <text evidence="1">APOE exists as multiple glycosylated and sialylated glycoforms within cells and in plasma. The extent of glycosylation and sialylation are tissue and context specific.</text>
</comment>
<comment type="PTM">
    <text evidence="1">Glycated in plasma VLDL.</text>
</comment>
<comment type="PTM">
    <text evidence="1">Phosphorylated by FAM20C in the extracellular medium.</text>
</comment>
<comment type="similarity">
    <text evidence="4">Belongs to the apolipoprotein A1/A4/E family.</text>
</comment>
<gene>
    <name type="primary">APOE</name>
</gene>
<feature type="signal peptide" evidence="3">
    <location>
        <begin position="1"/>
        <end position="18"/>
    </location>
</feature>
<feature type="chain" id="PRO_0000454009" description="Apolipoprotein E">
    <location>
        <begin position="19"/>
        <end position="298"/>
    </location>
</feature>
<feature type="repeat" description="1">
    <location>
        <begin position="74"/>
        <end position="95"/>
    </location>
</feature>
<feature type="repeat" description="2">
    <location>
        <begin position="96"/>
        <end position="117"/>
    </location>
</feature>
<feature type="repeat" description="3">
    <location>
        <begin position="118"/>
        <end position="139"/>
    </location>
</feature>
<feature type="repeat" description="4">
    <location>
        <begin position="140"/>
        <end position="161"/>
    </location>
</feature>
<feature type="repeat" description="5">
    <location>
        <begin position="162"/>
        <end position="183"/>
    </location>
</feature>
<feature type="repeat" description="8">
    <location>
        <begin position="223"/>
        <end position="244"/>
    </location>
</feature>
<feature type="region of interest" description="8 X 22 AA approximate tandem repeats">
    <location>
        <begin position="74"/>
        <end position="244"/>
    </location>
</feature>
<feature type="region of interest" description="LDL and other lipoprotein receptors binding" evidence="1">
    <location>
        <begin position="152"/>
        <end position="162"/>
    </location>
</feature>
<feature type="region of interest" description="Lipid-binding and lipoprotein association" evidence="1">
    <location>
        <begin position="204"/>
        <end position="272"/>
    </location>
</feature>
<feature type="region of interest" description="Specificity for association with VLDL" evidence="1">
    <location>
        <begin position="260"/>
        <end position="272"/>
    </location>
</feature>
<feature type="binding site" evidence="1">
    <location>
        <begin position="156"/>
        <end position="159"/>
    </location>
    <ligand>
        <name>heparin</name>
        <dbReference type="ChEBI" id="CHEBI:28304"/>
    </ligand>
</feature>
<feature type="binding site" evidence="1">
    <location>
        <begin position="218"/>
        <end position="225"/>
    </location>
    <ligand>
        <name>heparin</name>
        <dbReference type="ChEBI" id="CHEBI:28304"/>
    </ligand>
</feature>
<feature type="modified residue" description="Methionine sulfoxide" evidence="2">
    <location>
        <position position="137"/>
    </location>
</feature>
<feature type="modified residue" description="Phosphoserine" evidence="1">
    <location>
        <position position="141"/>
    </location>
</feature>
<evidence type="ECO:0000250" key="1">
    <source>
        <dbReference type="UniProtKB" id="P02649"/>
    </source>
</evidence>
<evidence type="ECO:0000250" key="2">
    <source>
        <dbReference type="UniProtKB" id="P08226"/>
    </source>
</evidence>
<evidence type="ECO:0000255" key="3"/>
<evidence type="ECO:0000305" key="4"/>
<name>APOE_DASPU</name>